<reference key="1">
    <citation type="submission" date="2004-08" db="EMBL/GenBank/DDBJ databases">
        <authorList>
            <consortium name="NIH - Xenopus Gene Collection (XGC) project"/>
        </authorList>
    </citation>
    <scope>NUCLEOTIDE SEQUENCE [LARGE SCALE MRNA]</scope>
    <source>
        <tissue>Embryo</tissue>
    </source>
</reference>
<organism>
    <name type="scientific">Xenopus laevis</name>
    <name type="common">African clawed frog</name>
    <dbReference type="NCBI Taxonomy" id="8355"/>
    <lineage>
        <taxon>Eukaryota</taxon>
        <taxon>Metazoa</taxon>
        <taxon>Chordata</taxon>
        <taxon>Craniata</taxon>
        <taxon>Vertebrata</taxon>
        <taxon>Euteleostomi</taxon>
        <taxon>Amphibia</taxon>
        <taxon>Batrachia</taxon>
        <taxon>Anura</taxon>
        <taxon>Pipoidea</taxon>
        <taxon>Pipidae</taxon>
        <taxon>Xenopodinae</taxon>
        <taxon>Xenopus</taxon>
        <taxon>Xenopus</taxon>
    </lineage>
</organism>
<protein>
    <recommendedName>
        <fullName>AN1-type zinc finger protein 3 homolog</fullName>
    </recommendedName>
</protein>
<accession>Q66J85</accession>
<dbReference type="EMBL" id="BC081022">
    <property type="protein sequence ID" value="AAH81022.1"/>
    <property type="molecule type" value="mRNA"/>
</dbReference>
<dbReference type="RefSeq" id="NP_001087635.1">
    <property type="nucleotide sequence ID" value="NM_001094166.1"/>
</dbReference>
<dbReference type="SMR" id="Q66J85"/>
<dbReference type="DNASU" id="447459"/>
<dbReference type="GeneID" id="447459"/>
<dbReference type="KEGG" id="xla:447459"/>
<dbReference type="AGR" id="Xenbase:XB-GENE-947499"/>
<dbReference type="CTD" id="447459"/>
<dbReference type="Xenbase" id="XB-GENE-947499">
    <property type="gene designation" value="zfand3.S"/>
</dbReference>
<dbReference type="OMA" id="IGRCKCD"/>
<dbReference type="OrthoDB" id="428577at2759"/>
<dbReference type="Proteomes" id="UP000186698">
    <property type="component" value="Chromosome 5S"/>
</dbReference>
<dbReference type="Bgee" id="447459">
    <property type="expression patterns" value="Expressed in blastula and 19 other cell types or tissues"/>
</dbReference>
<dbReference type="GO" id="GO:0003677">
    <property type="term" value="F:DNA binding"/>
    <property type="evidence" value="ECO:0007669"/>
    <property type="project" value="InterPro"/>
</dbReference>
<dbReference type="GO" id="GO:0008270">
    <property type="term" value="F:zinc ion binding"/>
    <property type="evidence" value="ECO:0007669"/>
    <property type="project" value="UniProtKB-KW"/>
</dbReference>
<dbReference type="FunFam" id="4.10.1110.10:FF:000011">
    <property type="entry name" value="AN1-type zinc finger protein 3"/>
    <property type="match status" value="1"/>
</dbReference>
<dbReference type="Gene3D" id="1.20.5.4770">
    <property type="match status" value="1"/>
</dbReference>
<dbReference type="Gene3D" id="4.10.1110.10">
    <property type="entry name" value="AN1-like Zinc finger"/>
    <property type="match status" value="1"/>
</dbReference>
<dbReference type="InterPro" id="IPR035896">
    <property type="entry name" value="AN1-like_Znf"/>
</dbReference>
<dbReference type="InterPro" id="IPR050652">
    <property type="entry name" value="AN1_A20_ZnFinger"/>
</dbReference>
<dbReference type="InterPro" id="IPR002653">
    <property type="entry name" value="Znf_A20"/>
</dbReference>
<dbReference type="InterPro" id="IPR000058">
    <property type="entry name" value="Znf_AN1"/>
</dbReference>
<dbReference type="PANTHER" id="PTHR10634">
    <property type="entry name" value="AN1-TYPE ZINC FINGER PROTEIN"/>
    <property type="match status" value="1"/>
</dbReference>
<dbReference type="PANTHER" id="PTHR10634:SF67">
    <property type="entry name" value="AN1-TYPE ZINC FINGER PROTEIN 3"/>
    <property type="match status" value="1"/>
</dbReference>
<dbReference type="Pfam" id="PF01754">
    <property type="entry name" value="zf-A20"/>
    <property type="match status" value="1"/>
</dbReference>
<dbReference type="Pfam" id="PF01428">
    <property type="entry name" value="zf-AN1"/>
    <property type="match status" value="1"/>
</dbReference>
<dbReference type="SMART" id="SM00259">
    <property type="entry name" value="ZnF_A20"/>
    <property type="match status" value="1"/>
</dbReference>
<dbReference type="SMART" id="SM00154">
    <property type="entry name" value="ZnF_AN1"/>
    <property type="match status" value="1"/>
</dbReference>
<dbReference type="SUPFAM" id="SSF118310">
    <property type="entry name" value="AN1-like Zinc finger"/>
    <property type="match status" value="1"/>
</dbReference>
<dbReference type="SUPFAM" id="SSF57716">
    <property type="entry name" value="Glucocorticoid receptor-like (DNA-binding domain)"/>
    <property type="match status" value="1"/>
</dbReference>
<dbReference type="PROSITE" id="PS51036">
    <property type="entry name" value="ZF_A20"/>
    <property type="match status" value="1"/>
</dbReference>
<dbReference type="PROSITE" id="PS51039">
    <property type="entry name" value="ZF_AN1"/>
    <property type="match status" value="1"/>
</dbReference>
<sequence length="226" mass="25013">MGDTGSERSNAPSLPPRCPCGFWGSSKTMNLCSKCFADFQKKQPDEDTAPSTSSSQSDLFPSETDSDNGNTSIPTPTVNPTQQLPTELNVDSPSKEDCGPCTDSAHVSLTTPSKRSCDSDSQSEDDTSPMKRPRLLDSGDRPDNSSRSKQKSRRRCFRCQIKLELVQQELGSCRCGYVFCMLHRLPEQHDCTFDHMGRGREEAIMKMVKLDRKVGRSCQRIGEGCS</sequence>
<name>ZFAN3_XENLA</name>
<keyword id="KW-0479">Metal-binding</keyword>
<keyword id="KW-1185">Reference proteome</keyword>
<keyword id="KW-0862">Zinc</keyword>
<keyword id="KW-0863">Zinc-finger</keyword>
<evidence type="ECO:0000255" key="1">
    <source>
        <dbReference type="PROSITE-ProRule" id="PRU00449"/>
    </source>
</evidence>
<evidence type="ECO:0000255" key="2">
    <source>
        <dbReference type="PROSITE-ProRule" id="PRU00451"/>
    </source>
</evidence>
<evidence type="ECO:0000256" key="3">
    <source>
        <dbReference type="SAM" id="MobiDB-lite"/>
    </source>
</evidence>
<gene>
    <name type="primary">zfand3</name>
</gene>
<feature type="chain" id="PRO_0000076373" description="AN1-type zinc finger protein 3 homolog">
    <location>
        <begin position="1"/>
        <end position="226"/>
    </location>
</feature>
<feature type="zinc finger region" description="A20-type" evidence="2">
    <location>
        <begin position="12"/>
        <end position="44"/>
    </location>
</feature>
<feature type="zinc finger region" description="AN1-type" evidence="1">
    <location>
        <begin position="150"/>
        <end position="199"/>
    </location>
</feature>
<feature type="region of interest" description="Disordered" evidence="3">
    <location>
        <begin position="42"/>
        <end position="149"/>
    </location>
</feature>
<feature type="compositionally biased region" description="Polar residues" evidence="3">
    <location>
        <begin position="49"/>
        <end position="59"/>
    </location>
</feature>
<feature type="compositionally biased region" description="Polar residues" evidence="3">
    <location>
        <begin position="67"/>
        <end position="92"/>
    </location>
</feature>
<feature type="compositionally biased region" description="Polar residues" evidence="3">
    <location>
        <begin position="105"/>
        <end position="114"/>
    </location>
</feature>
<feature type="compositionally biased region" description="Basic and acidic residues" evidence="3">
    <location>
        <begin position="134"/>
        <end position="146"/>
    </location>
</feature>
<feature type="binding site" evidence="2">
    <location>
        <position position="18"/>
    </location>
    <ligand>
        <name>Zn(2+)</name>
        <dbReference type="ChEBI" id="CHEBI:29105"/>
        <label>1</label>
    </ligand>
</feature>
<feature type="binding site" evidence="2">
    <location>
        <position position="20"/>
    </location>
    <ligand>
        <name>Zn(2+)</name>
        <dbReference type="ChEBI" id="CHEBI:29105"/>
        <label>1</label>
    </ligand>
</feature>
<feature type="binding site" evidence="2">
    <location>
        <position position="32"/>
    </location>
    <ligand>
        <name>Zn(2+)</name>
        <dbReference type="ChEBI" id="CHEBI:29105"/>
        <label>1</label>
    </ligand>
</feature>
<feature type="binding site" evidence="2">
    <location>
        <position position="35"/>
    </location>
    <ligand>
        <name>Zn(2+)</name>
        <dbReference type="ChEBI" id="CHEBI:29105"/>
        <label>1</label>
    </ligand>
</feature>
<feature type="binding site" evidence="1">
    <location>
        <position position="156"/>
    </location>
    <ligand>
        <name>Zn(2+)</name>
        <dbReference type="ChEBI" id="CHEBI:29105"/>
        <label>2</label>
    </ligand>
</feature>
<feature type="binding site" evidence="1">
    <location>
        <position position="159"/>
    </location>
    <ligand>
        <name>Zn(2+)</name>
        <dbReference type="ChEBI" id="CHEBI:29105"/>
        <label>2</label>
    </ligand>
</feature>
<feature type="binding site" evidence="1">
    <location>
        <position position="173"/>
    </location>
    <ligand>
        <name>Zn(2+)</name>
        <dbReference type="ChEBI" id="CHEBI:29105"/>
        <label>3</label>
    </ligand>
</feature>
<feature type="binding site" evidence="1">
    <location>
        <position position="175"/>
    </location>
    <ligand>
        <name>Zn(2+)</name>
        <dbReference type="ChEBI" id="CHEBI:29105"/>
        <label>3</label>
    </ligand>
</feature>
<feature type="binding site" evidence="1">
    <location>
        <position position="180"/>
    </location>
    <ligand>
        <name>Zn(2+)</name>
        <dbReference type="ChEBI" id="CHEBI:29105"/>
        <label>2</label>
    </ligand>
</feature>
<feature type="binding site" evidence="1">
    <location>
        <position position="183"/>
    </location>
    <ligand>
        <name>Zn(2+)</name>
        <dbReference type="ChEBI" id="CHEBI:29105"/>
        <label>2</label>
    </ligand>
</feature>
<feature type="binding site" evidence="1">
    <location>
        <position position="189"/>
    </location>
    <ligand>
        <name>Zn(2+)</name>
        <dbReference type="ChEBI" id="CHEBI:29105"/>
        <label>3</label>
    </ligand>
</feature>
<feature type="binding site" evidence="1">
    <location>
        <position position="191"/>
    </location>
    <ligand>
        <name>Zn(2+)</name>
        <dbReference type="ChEBI" id="CHEBI:29105"/>
        <label>3</label>
    </ligand>
</feature>
<proteinExistence type="evidence at transcript level"/>